<proteinExistence type="inferred from homology"/>
<feature type="chain" id="PRO_0000289657" description="Reactive oxygen species modulator 1">
    <location>
        <begin position="1"/>
        <end position="79"/>
    </location>
</feature>
<feature type="transmembrane region" description="Helical" evidence="2">
    <location>
        <begin position="22"/>
        <end position="44"/>
    </location>
</feature>
<feature type="region of interest" description="Sufficient for antibacterial activity" evidence="1">
    <location>
        <begin position="42"/>
        <end position="60"/>
    </location>
</feature>
<dbReference type="EMBL" id="DQ629137">
    <property type="protein sequence ID" value="ABK55622.1"/>
    <property type="molecule type" value="mRNA"/>
</dbReference>
<dbReference type="SMR" id="A1XQR6"/>
<dbReference type="FunCoup" id="A1XQR6">
    <property type="interactions" value="89"/>
</dbReference>
<dbReference type="STRING" id="9823.ENSSSCP00000007782"/>
<dbReference type="PaxDb" id="9823-ENSSSCP00000007782"/>
<dbReference type="PeptideAtlas" id="A1XQR6"/>
<dbReference type="eggNOG" id="KOG4096">
    <property type="taxonomic scope" value="Eukaryota"/>
</dbReference>
<dbReference type="InParanoid" id="A1XQR6"/>
<dbReference type="Proteomes" id="UP000008227">
    <property type="component" value="Unplaced"/>
</dbReference>
<dbReference type="Proteomes" id="UP000314985">
    <property type="component" value="Unplaced"/>
</dbReference>
<dbReference type="Proteomes" id="UP000694570">
    <property type="component" value="Unplaced"/>
</dbReference>
<dbReference type="Proteomes" id="UP000694571">
    <property type="component" value="Unplaced"/>
</dbReference>
<dbReference type="Proteomes" id="UP000694720">
    <property type="component" value="Unplaced"/>
</dbReference>
<dbReference type="Proteomes" id="UP000694722">
    <property type="component" value="Unplaced"/>
</dbReference>
<dbReference type="Proteomes" id="UP000694723">
    <property type="component" value="Unplaced"/>
</dbReference>
<dbReference type="Proteomes" id="UP000694724">
    <property type="component" value="Unplaced"/>
</dbReference>
<dbReference type="Proteomes" id="UP000694725">
    <property type="component" value="Unplaced"/>
</dbReference>
<dbReference type="Proteomes" id="UP000694726">
    <property type="component" value="Unplaced"/>
</dbReference>
<dbReference type="Proteomes" id="UP000694727">
    <property type="component" value="Unplaced"/>
</dbReference>
<dbReference type="Proteomes" id="UP000694728">
    <property type="component" value="Unplaced"/>
</dbReference>
<dbReference type="GO" id="GO:0005739">
    <property type="term" value="C:mitochondrion"/>
    <property type="evidence" value="ECO:0000250"/>
    <property type="project" value="UniProtKB"/>
</dbReference>
<dbReference type="GO" id="GO:0005744">
    <property type="term" value="C:TIM23 mitochondrial import inner membrane translocase complex"/>
    <property type="evidence" value="ECO:0000318"/>
    <property type="project" value="GO_Central"/>
</dbReference>
<dbReference type="GO" id="GO:0034614">
    <property type="term" value="P:cellular response to reactive oxygen species"/>
    <property type="evidence" value="ECO:0000250"/>
    <property type="project" value="UniProtKB"/>
</dbReference>
<dbReference type="GO" id="GO:0042742">
    <property type="term" value="P:defense response to bacterium"/>
    <property type="evidence" value="ECO:0007669"/>
    <property type="project" value="UniProtKB-KW"/>
</dbReference>
<dbReference type="GO" id="GO:2000379">
    <property type="term" value="P:positive regulation of reactive oxygen species metabolic process"/>
    <property type="evidence" value="ECO:0000250"/>
    <property type="project" value="UniProtKB"/>
</dbReference>
<dbReference type="GO" id="GO:0030150">
    <property type="term" value="P:protein import into mitochondrial matrix"/>
    <property type="evidence" value="ECO:0000318"/>
    <property type="project" value="GO_Central"/>
</dbReference>
<dbReference type="GO" id="GO:0045039">
    <property type="term" value="P:protein insertion into mitochondrial inner membrane"/>
    <property type="evidence" value="ECO:0000318"/>
    <property type="project" value="GO_Central"/>
</dbReference>
<dbReference type="GO" id="GO:0090399">
    <property type="term" value="P:replicative senescence"/>
    <property type="evidence" value="ECO:0000250"/>
    <property type="project" value="UniProtKB"/>
</dbReference>
<dbReference type="InterPro" id="IPR018450">
    <property type="entry name" value="Romo1/Mgr2"/>
</dbReference>
<dbReference type="PANTHER" id="PTHR28525">
    <property type="entry name" value="REACTIVE OXYGEN SPECIES MODULATOR 1"/>
    <property type="match status" value="1"/>
</dbReference>
<dbReference type="PANTHER" id="PTHR28525:SF1">
    <property type="entry name" value="REACTIVE OXYGEN SPECIES MODULATOR 1"/>
    <property type="match status" value="1"/>
</dbReference>
<dbReference type="Pfam" id="PF10247">
    <property type="entry name" value="Romo1"/>
    <property type="match status" value="1"/>
</dbReference>
<dbReference type="SMART" id="SM01378">
    <property type="entry name" value="Romo1"/>
    <property type="match status" value="1"/>
</dbReference>
<sequence>MPVAVGPYGQSQPSCFDRVKMGFVMGCAVGMAAGALFGPFSCLRIGMRGRELMGGIGKTMMQSGGTFGPFMAIGMGIRC</sequence>
<protein>
    <recommendedName>
        <fullName>Reactive oxygen species modulator 1</fullName>
        <shortName>ROS modulator 1</shortName>
    </recommendedName>
    <alternativeName>
        <fullName>Protein MGR2 homolog</fullName>
    </alternativeName>
</protein>
<reference key="1">
    <citation type="submission" date="2006-05" db="EMBL/GenBank/DDBJ databases">
        <title>Generation and analysis of cDNA sequences derived from a porcine skeletal muscle library.</title>
        <authorList>
            <person name="Cai G."/>
            <person name="Chen Y."/>
            <person name="Wang C."/>
            <person name="Li J."/>
            <person name="Peng G."/>
            <person name="Zhang H."/>
        </authorList>
    </citation>
    <scope>NUCLEOTIDE SEQUENCE [MRNA]</scope>
    <source>
        <tissue>Longissimus dorsi muscle</tissue>
    </source>
</reference>
<keyword id="KW-0044">Antibiotic</keyword>
<keyword id="KW-0929">Antimicrobial</keyword>
<keyword id="KW-0472">Membrane</keyword>
<keyword id="KW-0496">Mitochondrion</keyword>
<keyword id="KW-0999">Mitochondrion inner membrane</keyword>
<keyword id="KW-1185">Reference proteome</keyword>
<keyword id="KW-0812">Transmembrane</keyword>
<keyword id="KW-1133">Transmembrane helix</keyword>
<organism>
    <name type="scientific">Sus scrofa</name>
    <name type="common">Pig</name>
    <dbReference type="NCBI Taxonomy" id="9823"/>
    <lineage>
        <taxon>Eukaryota</taxon>
        <taxon>Metazoa</taxon>
        <taxon>Chordata</taxon>
        <taxon>Craniata</taxon>
        <taxon>Vertebrata</taxon>
        <taxon>Euteleostomi</taxon>
        <taxon>Mammalia</taxon>
        <taxon>Eutheria</taxon>
        <taxon>Laurasiatheria</taxon>
        <taxon>Artiodactyla</taxon>
        <taxon>Suina</taxon>
        <taxon>Suidae</taxon>
        <taxon>Sus</taxon>
    </lineage>
</organism>
<gene>
    <name type="primary">ROMO1</name>
</gene>
<comment type="function">
    <text evidence="1">Has antibacterial activity against a variety of bacteria including S.aureus, P.aeruginosa and M.tuberculosis. Acts by inducing bacterial membrane breakage (By similarity).</text>
</comment>
<comment type="function">
    <text evidence="1">Induces production of reactive oxygen species (ROS) which are necessary for cell proliferation. May play a role in inducing oxidative DNA damage and replicative senescence. May play a role in the coordination of mitochondrial morphology and cell proliferation (By similarity).</text>
</comment>
<comment type="subcellular location">
    <subcellularLocation>
        <location evidence="1">Mitochondrion inner membrane</location>
        <topology evidence="1">Single-pass membrane protein</topology>
    </subcellularLocation>
</comment>
<comment type="similarity">
    <text evidence="3">Belongs to the MGR2 family.</text>
</comment>
<accession>A1XQR6</accession>
<name>ROMO1_PIG</name>
<evidence type="ECO:0000250" key="1"/>
<evidence type="ECO:0000255" key="2"/>
<evidence type="ECO:0000305" key="3"/>